<proteinExistence type="inferred from homology"/>
<protein>
    <recommendedName>
        <fullName>Low molecular weight protein-tyrosine-phosphatase Etp</fullName>
        <ecNumber>3.1.3.48</ecNumber>
    </recommendedName>
</protein>
<feature type="chain" id="PRO_0000046577" description="Low molecular weight protein-tyrosine-phosphatase Etp">
    <location>
        <begin position="1"/>
        <end position="148"/>
    </location>
</feature>
<feature type="active site" description="Nucleophile" evidence="2">
    <location>
        <position position="13"/>
    </location>
</feature>
<feature type="active site" evidence="2">
    <location>
        <position position="19"/>
    </location>
</feature>
<feature type="active site" description="Proton donor" evidence="2">
    <location>
        <position position="119"/>
    </location>
</feature>
<evidence type="ECO:0000250" key="1"/>
<evidence type="ECO:0000250" key="2">
    <source>
        <dbReference type="UniProtKB" id="P11064"/>
    </source>
</evidence>
<evidence type="ECO:0000305" key="3"/>
<name>ETP_ECO57</name>
<accession>P0ACZ3</accession>
<accession>P75880</accession>
<accession>Q8XC24</accession>
<comment type="function">
    <text evidence="1">Dephosphorylates etk.</text>
</comment>
<comment type="catalytic activity">
    <reaction>
        <text>O-phospho-L-tyrosyl-[protein] + H2O = L-tyrosyl-[protein] + phosphate</text>
        <dbReference type="Rhea" id="RHEA:10684"/>
        <dbReference type="Rhea" id="RHEA-COMP:10136"/>
        <dbReference type="Rhea" id="RHEA-COMP:20101"/>
        <dbReference type="ChEBI" id="CHEBI:15377"/>
        <dbReference type="ChEBI" id="CHEBI:43474"/>
        <dbReference type="ChEBI" id="CHEBI:46858"/>
        <dbReference type="ChEBI" id="CHEBI:61978"/>
        <dbReference type="EC" id="3.1.3.48"/>
    </reaction>
</comment>
<comment type="similarity">
    <text evidence="3">Belongs to the low molecular weight phosphotyrosine protein phosphatase family.</text>
</comment>
<comment type="sequence caution" evidence="3">
    <conflict type="erroneous initiation">
        <sequence resource="EMBL-CDS" id="AAG55530"/>
    </conflict>
    <text>Extended N-terminus.</text>
</comment>
<sequence length="148" mass="16386">MAQLKFNSILVVCTGNICRSPIGERLLRKRLPGVKVKSAGVHGLVKHPADATAADVAANHGVSLEGHAGRKLTAEMARNYDLILAMESEHIAQVTAIAPEVRGKTMLFGQWLEQKEIPDPYRKSQDAFEHVYGMLERASQEWAKRLSR</sequence>
<gene>
    <name type="primary">etp</name>
    <name type="ordered locus">Z1399</name>
    <name type="ordered locus">ECs1138</name>
</gene>
<organism>
    <name type="scientific">Escherichia coli O157:H7</name>
    <dbReference type="NCBI Taxonomy" id="83334"/>
    <lineage>
        <taxon>Bacteria</taxon>
        <taxon>Pseudomonadati</taxon>
        <taxon>Pseudomonadota</taxon>
        <taxon>Gammaproteobacteria</taxon>
        <taxon>Enterobacterales</taxon>
        <taxon>Enterobacteriaceae</taxon>
        <taxon>Escherichia</taxon>
    </lineage>
</organism>
<dbReference type="EC" id="3.1.3.48"/>
<dbReference type="EMBL" id="AE005174">
    <property type="protein sequence ID" value="AAG55530.1"/>
    <property type="status" value="ALT_INIT"/>
    <property type="molecule type" value="Genomic_DNA"/>
</dbReference>
<dbReference type="EMBL" id="BA000007">
    <property type="protein sequence ID" value="BAB34561.2"/>
    <property type="molecule type" value="Genomic_DNA"/>
</dbReference>
<dbReference type="RefSeq" id="NP_309165.2">
    <property type="nucleotide sequence ID" value="NC_002695.1"/>
</dbReference>
<dbReference type="RefSeq" id="WP_000057871.1">
    <property type="nucleotide sequence ID" value="NZ_VOAI01000025.1"/>
</dbReference>
<dbReference type="SMR" id="P0ACZ3"/>
<dbReference type="STRING" id="155864.Z1399"/>
<dbReference type="GeneID" id="75171057"/>
<dbReference type="GeneID" id="914076"/>
<dbReference type="KEGG" id="ece:Z1399"/>
<dbReference type="KEGG" id="ecs:ECs_1138"/>
<dbReference type="PATRIC" id="fig|386585.9.peg.1254"/>
<dbReference type="eggNOG" id="COG0394">
    <property type="taxonomic scope" value="Bacteria"/>
</dbReference>
<dbReference type="HOGENOM" id="CLU_071415_1_1_6"/>
<dbReference type="OMA" id="AFFPQKA"/>
<dbReference type="Proteomes" id="UP000000558">
    <property type="component" value="Chromosome"/>
</dbReference>
<dbReference type="Proteomes" id="UP000002519">
    <property type="component" value="Chromosome"/>
</dbReference>
<dbReference type="GO" id="GO:0004725">
    <property type="term" value="F:protein tyrosine phosphatase activity"/>
    <property type="evidence" value="ECO:0007669"/>
    <property type="project" value="UniProtKB-EC"/>
</dbReference>
<dbReference type="CDD" id="cd16343">
    <property type="entry name" value="LMWPTP"/>
    <property type="match status" value="1"/>
</dbReference>
<dbReference type="FunFam" id="3.40.50.2300:FF:000041">
    <property type="entry name" value="Low molecular weight protein-tyrosine-phosphatase"/>
    <property type="match status" value="1"/>
</dbReference>
<dbReference type="Gene3D" id="3.40.50.2300">
    <property type="match status" value="1"/>
</dbReference>
<dbReference type="InterPro" id="IPR050438">
    <property type="entry name" value="LMW_PTPase"/>
</dbReference>
<dbReference type="InterPro" id="IPR023485">
    <property type="entry name" value="Ptyr_pPase"/>
</dbReference>
<dbReference type="InterPro" id="IPR036196">
    <property type="entry name" value="Ptyr_pPase_sf"/>
</dbReference>
<dbReference type="InterPro" id="IPR017867">
    <property type="entry name" value="Tyr_phospatase_low_mol_wt"/>
</dbReference>
<dbReference type="NCBIfam" id="NF008486">
    <property type="entry name" value="PRK11391.1"/>
    <property type="match status" value="1"/>
</dbReference>
<dbReference type="PANTHER" id="PTHR11717">
    <property type="entry name" value="LOW MOLECULAR WEIGHT PROTEIN TYROSINE PHOSPHATASE"/>
    <property type="match status" value="1"/>
</dbReference>
<dbReference type="PANTHER" id="PTHR11717:SF31">
    <property type="entry name" value="LOW MOLECULAR WEIGHT PROTEIN-TYROSINE-PHOSPHATASE ETP-RELATED"/>
    <property type="match status" value="1"/>
</dbReference>
<dbReference type="Pfam" id="PF01451">
    <property type="entry name" value="LMWPc"/>
    <property type="match status" value="1"/>
</dbReference>
<dbReference type="PRINTS" id="PR00719">
    <property type="entry name" value="LMWPTPASE"/>
</dbReference>
<dbReference type="SMART" id="SM00226">
    <property type="entry name" value="LMWPc"/>
    <property type="match status" value="1"/>
</dbReference>
<dbReference type="SUPFAM" id="SSF52788">
    <property type="entry name" value="Phosphotyrosine protein phosphatases I"/>
    <property type="match status" value="1"/>
</dbReference>
<reference key="1">
    <citation type="journal article" date="2001" name="Nature">
        <title>Genome sequence of enterohaemorrhagic Escherichia coli O157:H7.</title>
        <authorList>
            <person name="Perna N.T."/>
            <person name="Plunkett G. III"/>
            <person name="Burland V."/>
            <person name="Mau B."/>
            <person name="Glasner J.D."/>
            <person name="Rose D.J."/>
            <person name="Mayhew G.F."/>
            <person name="Evans P.S."/>
            <person name="Gregor J."/>
            <person name="Kirkpatrick H.A."/>
            <person name="Posfai G."/>
            <person name="Hackett J."/>
            <person name="Klink S."/>
            <person name="Boutin A."/>
            <person name="Shao Y."/>
            <person name="Miller L."/>
            <person name="Grotbeck E.J."/>
            <person name="Davis N.W."/>
            <person name="Lim A."/>
            <person name="Dimalanta E.T."/>
            <person name="Potamousis K."/>
            <person name="Apodaca J."/>
            <person name="Anantharaman T.S."/>
            <person name="Lin J."/>
            <person name="Yen G."/>
            <person name="Schwartz D.C."/>
            <person name="Welch R.A."/>
            <person name="Blattner F.R."/>
        </authorList>
    </citation>
    <scope>NUCLEOTIDE SEQUENCE [LARGE SCALE GENOMIC DNA]</scope>
    <source>
        <strain>O157:H7 / EDL933 / ATCC 700927 / EHEC</strain>
    </source>
</reference>
<reference key="2">
    <citation type="journal article" date="2001" name="DNA Res.">
        <title>Complete genome sequence of enterohemorrhagic Escherichia coli O157:H7 and genomic comparison with a laboratory strain K-12.</title>
        <authorList>
            <person name="Hayashi T."/>
            <person name="Makino K."/>
            <person name="Ohnishi M."/>
            <person name="Kurokawa K."/>
            <person name="Ishii K."/>
            <person name="Yokoyama K."/>
            <person name="Han C.-G."/>
            <person name="Ohtsubo E."/>
            <person name="Nakayama K."/>
            <person name="Murata T."/>
            <person name="Tanaka M."/>
            <person name="Tobe T."/>
            <person name="Iida T."/>
            <person name="Takami H."/>
            <person name="Honda T."/>
            <person name="Sasakawa C."/>
            <person name="Ogasawara N."/>
            <person name="Yasunaga T."/>
            <person name="Kuhara S."/>
            <person name="Shiba T."/>
            <person name="Hattori M."/>
            <person name="Shinagawa H."/>
        </authorList>
    </citation>
    <scope>NUCLEOTIDE SEQUENCE [LARGE SCALE GENOMIC DNA]</scope>
    <source>
        <strain>O157:H7 / Sakai / RIMD 0509952 / EHEC</strain>
    </source>
</reference>
<keyword id="KW-0378">Hydrolase</keyword>
<keyword id="KW-0904">Protein phosphatase</keyword>
<keyword id="KW-1185">Reference proteome</keyword>